<protein>
    <recommendedName>
        <fullName evidence="8">Shugoshin 2A</fullName>
    </recommendedName>
    <alternativeName>
        <fullName evidence="1">Shugoshin-2</fullName>
    </alternativeName>
    <alternativeName>
        <fullName>Shugoshin-like 2</fullName>
    </alternativeName>
</protein>
<comment type="function">
    <text evidence="1 5 6">Cooperates with PPP2CA to protect centromeric cohesin from separase-mediated cleavage in oocytes specifically during meiosis I. Has a crucial role in protecting REC8 at centromeres from cleavage by separase. During meiosis, protects centromeric cohesion complexes until metaphase II/anaphase II transition, preventing premature release of meiosis-specific REC8 cohesin complexes from anaphase I centromeres. Is thus essential for an accurate gametogenesis. May act by targeting PPP2CA to centromeres, thus leading to cohesin dephosphorylation. Essential for recruiting KIF2C to the inner centromere and for correcting defective kinetochore attachments. Involved in centromeric enrichment of AUKRB in prometaphase.</text>
</comment>
<comment type="subunit">
    <text evidence="1">Part of an astrin (SPAG5)-kinastrin (SKAP) complex containing KNSTRN, SPAG5, PLK1, DYNLL1 and SGO2A (By similarity). Interacts with CDCA8 (By similarity). Interacts with PPP2CA (By similarity).</text>
</comment>
<comment type="interaction">
    <interactant intactId="EBI-2552468">
        <id>Q7TSY8</id>
    </interactant>
    <interactant intactId="EBI-2552918">
        <id>Q9Z1B5</id>
        <label>Mad2l1</label>
    </interactant>
    <organismsDiffer>false</organismsDiffer>
    <experiments>3</experiments>
</comment>
<comment type="subcellular location">
    <subcellularLocation>
        <location evidence="1">Nucleus</location>
    </subcellularLocation>
    <subcellularLocation>
        <location evidence="4 5">Chromosome</location>
        <location evidence="4 5">Centromere</location>
    </subcellularLocation>
    <subcellularLocation>
        <location evidence="4">Chromosome</location>
        <location evidence="4">Centromere</location>
        <location evidence="4">Kinetochore</location>
    </subcellularLocation>
    <text evidence="1 4 5">Centromeric localization requires the presence of BUB1 and AUKRB (By similarity). During meiosis I, accumulates at centromeres during diplotene, and colocalizes differentially with the cohesin subunits RAD21 and REC8 at metaphase I centromeres (PubMed:17205076, PubMed:18084284). SGO2A and RAD21 change their relative distributions during telophase I when sister-kinetochore association is lost (PubMed:17205076). During meiosis II, it shows a striking tension-dependent redistribution within centromeres throughout chromosome congression during prometaphase II, as it does during mitosis (PubMed:17205076).</text>
</comment>
<comment type="tissue specificity">
    <text evidence="5">Ubiquitously expressed in proliferating cells. Highly expressed in the testis and oocytes.</text>
</comment>
<comment type="disruption phenotype">
    <text evidence="6">Mice develop normally and survive to adulthood without any apparent alteration. However, both males and females are infertile. This defect appears cytologically as complete loss of centromere cohesion at metaphase II, leading to single chromatids, and physiologically as formation of aneuploid gametes that gave rise to infertility.</text>
</comment>
<comment type="miscellaneous">
    <text>Shugoshin is Japanese for guardian spirit (as it is known to be a protector of centromeric cohesin).</text>
</comment>
<comment type="similarity">
    <text evidence="7">Belongs to the shugoshin family.</text>
</comment>
<comment type="sequence caution" evidence="7">
    <conflict type="miscellaneous discrepancy">
        <sequence resource="EMBL-CDS" id="AAH23855"/>
    </conflict>
    <text>Contaminating sequence. Potential poly-A sequence.</text>
</comment>
<name>SGO2A_MOUSE</name>
<dbReference type="EMBL" id="BC023855">
    <property type="protein sequence ID" value="AAH23855.1"/>
    <property type="status" value="ALT_SEQ"/>
    <property type="molecule type" value="mRNA"/>
</dbReference>
<dbReference type="EMBL" id="BC044797">
    <property type="protein sequence ID" value="AAH44797.1"/>
    <property type="molecule type" value="mRNA"/>
</dbReference>
<dbReference type="EMBL" id="BC052742">
    <property type="protein sequence ID" value="AAH52742.1"/>
    <property type="molecule type" value="mRNA"/>
</dbReference>
<dbReference type="EMBL" id="AK017868">
    <property type="protein sequence ID" value="BAB30980.1"/>
    <property type="molecule type" value="mRNA"/>
</dbReference>
<dbReference type="EMBL" id="AK042448">
    <property type="protein sequence ID" value="BAC31263.1"/>
    <property type="molecule type" value="mRNA"/>
</dbReference>
<dbReference type="CCDS" id="CCDS35574.1"/>
<dbReference type="RefSeq" id="NP_001171338.1">
    <property type="nucleotide sequence ID" value="NM_001177867.1"/>
</dbReference>
<dbReference type="RefSeq" id="NP_950172.1">
    <property type="nucleotide sequence ID" value="NM_199007.2"/>
</dbReference>
<dbReference type="SMR" id="Q7TSY8"/>
<dbReference type="BioGRID" id="212920">
    <property type="interactions" value="59"/>
</dbReference>
<dbReference type="FunCoup" id="Q7TSY8">
    <property type="interactions" value="976"/>
</dbReference>
<dbReference type="IntAct" id="Q7TSY8">
    <property type="interactions" value="59"/>
</dbReference>
<dbReference type="MINT" id="Q7TSY8"/>
<dbReference type="STRING" id="10090.ENSMUSP00000027202"/>
<dbReference type="GlyGen" id="Q7TSY8">
    <property type="glycosylation" value="1 site, 1 O-linked glycan (1 site)"/>
</dbReference>
<dbReference type="iPTMnet" id="Q7TSY8"/>
<dbReference type="PhosphoSitePlus" id="Q7TSY8"/>
<dbReference type="PaxDb" id="10090-ENSMUSP00000027202"/>
<dbReference type="PeptideAtlas" id="Q7TSY8"/>
<dbReference type="ProteomicsDB" id="256987"/>
<dbReference type="Pumba" id="Q7TSY8"/>
<dbReference type="DNASU" id="68549"/>
<dbReference type="Ensembl" id="ENSMUST00000027202.9">
    <property type="protein sequence ID" value="ENSMUSP00000027202.9"/>
    <property type="gene ID" value="ENSMUSG00000026039.10"/>
</dbReference>
<dbReference type="GeneID" id="68549"/>
<dbReference type="KEGG" id="mmu:68549"/>
<dbReference type="UCSC" id="uc007bbk.2">
    <property type="organism name" value="mouse"/>
</dbReference>
<dbReference type="AGR" id="MGI:1098767"/>
<dbReference type="CTD" id="68549"/>
<dbReference type="MGI" id="MGI:1098767">
    <property type="gene designation" value="Sgo2a"/>
</dbReference>
<dbReference type="VEuPathDB" id="HostDB:ENSMUSG00000026039"/>
<dbReference type="eggNOG" id="ENOG502S9Y1">
    <property type="taxonomic scope" value="Eukaryota"/>
</dbReference>
<dbReference type="GeneTree" id="ENSGT00940000154107"/>
<dbReference type="HOGENOM" id="CLU_264434_0_0_1"/>
<dbReference type="InParanoid" id="Q7TSY8"/>
<dbReference type="OMA" id="LNWNNEI"/>
<dbReference type="OrthoDB" id="5990092at2759"/>
<dbReference type="PhylomeDB" id="Q7TSY8"/>
<dbReference type="TreeFam" id="TF350100"/>
<dbReference type="Reactome" id="R-MMU-141444">
    <property type="pathway name" value="Amplification of signal from unattached kinetochores via a MAD2 inhibitory signal"/>
</dbReference>
<dbReference type="Reactome" id="R-MMU-2467813">
    <property type="pathway name" value="Separation of Sister Chromatids"/>
</dbReference>
<dbReference type="Reactome" id="R-MMU-2500257">
    <property type="pathway name" value="Resolution of Sister Chromatid Cohesion"/>
</dbReference>
<dbReference type="Reactome" id="R-MMU-5663220">
    <property type="pathway name" value="RHO GTPases Activate Formins"/>
</dbReference>
<dbReference type="Reactome" id="R-MMU-68877">
    <property type="pathway name" value="Mitotic Prometaphase"/>
</dbReference>
<dbReference type="Reactome" id="R-MMU-9648025">
    <property type="pathway name" value="EML4 and NUDC in mitotic spindle formation"/>
</dbReference>
<dbReference type="BioGRID-ORCS" id="68549">
    <property type="hits" value="3 hits in 77 CRISPR screens"/>
</dbReference>
<dbReference type="ChiTaRS" id="Sgo2a">
    <property type="organism name" value="mouse"/>
</dbReference>
<dbReference type="PRO" id="PR:Q7TSY8"/>
<dbReference type="Proteomes" id="UP000000589">
    <property type="component" value="Chromosome 1"/>
</dbReference>
<dbReference type="RNAct" id="Q7TSY8">
    <property type="molecule type" value="protein"/>
</dbReference>
<dbReference type="Bgee" id="ENSMUSG00000026039">
    <property type="expression patterns" value="Expressed in undifferentiated genital tubercle and 128 other cell types or tissues"/>
</dbReference>
<dbReference type="GO" id="GO:0000775">
    <property type="term" value="C:chromosome, centromeric region"/>
    <property type="evidence" value="ECO:0000314"/>
    <property type="project" value="UniProtKB"/>
</dbReference>
<dbReference type="GO" id="GO:0000779">
    <property type="term" value="C:condensed chromosome, centromeric region"/>
    <property type="evidence" value="ECO:0000314"/>
    <property type="project" value="MGI"/>
</dbReference>
<dbReference type="GO" id="GO:0000776">
    <property type="term" value="C:kinetochore"/>
    <property type="evidence" value="ECO:0000314"/>
    <property type="project" value="UniProtKB"/>
</dbReference>
<dbReference type="GO" id="GO:0030892">
    <property type="term" value="C:mitotic cohesin complex"/>
    <property type="evidence" value="ECO:0000266"/>
    <property type="project" value="MGI"/>
</dbReference>
<dbReference type="GO" id="GO:0005634">
    <property type="term" value="C:nucleus"/>
    <property type="evidence" value="ECO:0007669"/>
    <property type="project" value="UniProtKB-SubCell"/>
</dbReference>
<dbReference type="GO" id="GO:0051301">
    <property type="term" value="P:cell division"/>
    <property type="evidence" value="ECO:0007669"/>
    <property type="project" value="UniProtKB-KW"/>
</dbReference>
<dbReference type="GO" id="GO:0007059">
    <property type="term" value="P:chromosome segregation"/>
    <property type="evidence" value="ECO:0007669"/>
    <property type="project" value="UniProtKB-KW"/>
</dbReference>
<dbReference type="GO" id="GO:0007143">
    <property type="term" value="P:female meiotic nuclear division"/>
    <property type="evidence" value="ECO:0000315"/>
    <property type="project" value="MGI"/>
</dbReference>
<dbReference type="GO" id="GO:0035875">
    <property type="term" value="P:maintenance of meiotic sister chromatid cohesion, centromeric"/>
    <property type="evidence" value="ECO:0000315"/>
    <property type="project" value="MGI"/>
</dbReference>
<dbReference type="GO" id="GO:0007140">
    <property type="term" value="P:male meiotic nuclear division"/>
    <property type="evidence" value="ECO:0000315"/>
    <property type="project" value="MGI"/>
</dbReference>
<dbReference type="GO" id="GO:0010789">
    <property type="term" value="P:meiotic sister chromatid cohesion involved in meiosis I"/>
    <property type="evidence" value="ECO:0000315"/>
    <property type="project" value="MGI"/>
</dbReference>
<dbReference type="GO" id="GO:0051754">
    <property type="term" value="P:meiotic sister chromatid cohesion, centromeric"/>
    <property type="evidence" value="ECO:0000315"/>
    <property type="project" value="MGI"/>
</dbReference>
<dbReference type="GO" id="GO:2000711">
    <property type="term" value="P:positive regulation of maintenance of meiotic sister chromatid cohesion, centromeric"/>
    <property type="evidence" value="ECO:0000315"/>
    <property type="project" value="MGI"/>
</dbReference>
<dbReference type="GO" id="GO:0008104">
    <property type="term" value="P:protein localization"/>
    <property type="evidence" value="ECO:0000315"/>
    <property type="project" value="MGI"/>
</dbReference>
<dbReference type="InterPro" id="IPR038889">
    <property type="entry name" value="Shugoshin1/2"/>
</dbReference>
<dbReference type="PANTHER" id="PTHR21577">
    <property type="entry name" value="SHUGOSHIN"/>
    <property type="match status" value="1"/>
</dbReference>
<dbReference type="PANTHER" id="PTHR21577:SF3">
    <property type="entry name" value="SHUGOSHIN 1-RELATED"/>
    <property type="match status" value="1"/>
</dbReference>
<organism>
    <name type="scientific">Mus musculus</name>
    <name type="common">Mouse</name>
    <dbReference type="NCBI Taxonomy" id="10090"/>
    <lineage>
        <taxon>Eukaryota</taxon>
        <taxon>Metazoa</taxon>
        <taxon>Chordata</taxon>
        <taxon>Craniata</taxon>
        <taxon>Vertebrata</taxon>
        <taxon>Euteleostomi</taxon>
        <taxon>Mammalia</taxon>
        <taxon>Eutheria</taxon>
        <taxon>Euarchontoglires</taxon>
        <taxon>Glires</taxon>
        <taxon>Rodentia</taxon>
        <taxon>Myomorpha</taxon>
        <taxon>Muroidea</taxon>
        <taxon>Muridae</taxon>
        <taxon>Murinae</taxon>
        <taxon>Mus</taxon>
        <taxon>Mus</taxon>
    </lineage>
</organism>
<feature type="chain" id="PRO_0000055440" description="Shugoshin 2A">
    <location>
        <begin position="1"/>
        <end position="1164"/>
    </location>
</feature>
<feature type="region of interest" description="Disordered" evidence="3">
    <location>
        <begin position="160"/>
        <end position="269"/>
    </location>
</feature>
<feature type="region of interest" description="Disordered" evidence="3">
    <location>
        <begin position="287"/>
        <end position="314"/>
    </location>
</feature>
<feature type="region of interest" description="Disordered" evidence="3">
    <location>
        <begin position="390"/>
        <end position="492"/>
    </location>
</feature>
<feature type="region of interest" description="Disordered" evidence="3">
    <location>
        <begin position="521"/>
        <end position="541"/>
    </location>
</feature>
<feature type="region of interest" description="Disordered" evidence="3">
    <location>
        <begin position="917"/>
        <end position="992"/>
    </location>
</feature>
<feature type="region of interest" description="Disordered" evidence="3">
    <location>
        <begin position="1092"/>
        <end position="1164"/>
    </location>
</feature>
<feature type="coiled-coil region" evidence="2">
    <location>
        <begin position="62"/>
        <end position="113"/>
    </location>
</feature>
<feature type="compositionally biased region" description="Low complexity" evidence="3">
    <location>
        <begin position="182"/>
        <end position="198"/>
    </location>
</feature>
<feature type="compositionally biased region" description="Polar residues" evidence="3">
    <location>
        <begin position="238"/>
        <end position="247"/>
    </location>
</feature>
<feature type="compositionally biased region" description="Polar residues" evidence="3">
    <location>
        <begin position="288"/>
        <end position="299"/>
    </location>
</feature>
<feature type="compositionally biased region" description="Basic and acidic residues" evidence="3">
    <location>
        <begin position="390"/>
        <end position="412"/>
    </location>
</feature>
<feature type="compositionally biased region" description="Polar residues" evidence="3">
    <location>
        <begin position="443"/>
        <end position="472"/>
    </location>
</feature>
<feature type="compositionally biased region" description="Basic and acidic residues" evidence="3">
    <location>
        <begin position="525"/>
        <end position="541"/>
    </location>
</feature>
<feature type="compositionally biased region" description="Polar residues" evidence="3">
    <location>
        <begin position="934"/>
        <end position="948"/>
    </location>
</feature>
<feature type="compositionally biased region" description="Low complexity" evidence="3">
    <location>
        <begin position="1112"/>
        <end position="1125"/>
    </location>
</feature>
<feature type="compositionally biased region" description="Polar residues" evidence="3">
    <location>
        <begin position="1126"/>
        <end position="1140"/>
    </location>
</feature>
<feature type="modified residue" description="Phosphoserine" evidence="1">
    <location>
        <position position="1042"/>
    </location>
</feature>
<feature type="sequence conflict" description="In Ref. 2; BAB30980." evidence="7" ref="2">
    <original>Q</original>
    <variation>R</variation>
    <location>
        <position position="78"/>
    </location>
</feature>
<sequence length="1164" mass="130277">MEYPGIKVDTVTSGIQRRVKGRIAKTNLNVSLASKIKAKILNNSSIFKISLKHNNRALARALSKEKENSRRITTEKMQLQKEVEKLNFENTFLRLKLNTLNKKLVEIESHVSNDLLTAIEISSLSEFHQGSFLLSATKKQRNSKQCKPAHLPYARVLLTSENDDDDGADDKWQTKCNNRTISKTSPDSTSSVSRQPSSLHQCNLKAFPPKEDNQKTCGSGHLEHTSSVDILPNESHSDQSPKSSLSEMKTAPSPSLRREKLSHGNVTMRKKCVSSTPDILYVTDLDHQPTSSPGSNWNNEIHGHTNETSNNTQRNAECFLDLPSESSSEPDAKRMELVQKNTDSFHFQKTVYDAADMELTATDIGKIVAVSKSKKNQNKKKADCRKETFRKVKGASSDKKRESSKRECKDGSEVGAEEEADAARAERGAGVLDGRGDSEEPNCISSTEQPSQVNTQKKRTLQNSSDQENIQNTKRRQTYTTDEQEETNPFSRHSVKFLQDGKFDLCQKTLHHNLSKPSRQTFVIRKSEKDNLFPNQEDKDTISENLEVTNEFHIDDLSIEANENVCDHETQTMLDLKKSVSAQQNQTKINKTKQKINRRTKIISVMSQVYEDNDKDIHVLEKDNFPFHTQANKETTSGNLESSKEFESPLLFTRDNGSLRDCKTQNVLDLHKQIPDLYPDRNESQISKIPRQKVNRKTEVISGVKCFSNDQGVHCSEKDKSLLLQKDKDFPGTLKDLSEFDTPAFCNKDSAKSCDYKSEMLLGLKKHDPNMQPACQDDSKAGKKLRQKVNRKTEIISKITQIHENDRGSTHDSLNKKLCQKVNISKIISQMNQIYETINEDGNGFKSSIKDCEDIKSCDFGEINSNKKENYDPIQDPCTLVKKTKRKGSCKAGSSLAGAKNRCGLQLTDSSQVQSVPLDSGLRHHPNEADSGPGEQTNLPKMQKQSAGRSLGDAFSVSLGKEGSRPAKAVSKMTPKSKKRKLPLGCSPETHGTVEITPNTDLAKAVDSQQTEKENYLEKEKIAKRKPDFCTKVLKPLSETCSSNIKNSSLDSMCKSSLPLSISSRKTLMLEESSSLESTCIFQVGDAAHEKITTGTRNPHHRTQKSTPGSRTSLVLVDTSSVSDTNPANPENESEGQSSHPMRRKRQCVPLNLTEPSLRSKMRR</sequence>
<evidence type="ECO:0000250" key="1">
    <source>
        <dbReference type="UniProtKB" id="Q562F6"/>
    </source>
</evidence>
<evidence type="ECO:0000255" key="2"/>
<evidence type="ECO:0000256" key="3">
    <source>
        <dbReference type="SAM" id="MobiDB-lite"/>
    </source>
</evidence>
<evidence type="ECO:0000269" key="4">
    <source>
    </source>
</evidence>
<evidence type="ECO:0000269" key="5">
    <source>
    </source>
</evidence>
<evidence type="ECO:0000269" key="6">
    <source>
    </source>
</evidence>
<evidence type="ECO:0000305" key="7"/>
<evidence type="ECO:0000312" key="8">
    <source>
        <dbReference type="MGI" id="MGI:1098767"/>
    </source>
</evidence>
<keyword id="KW-0131">Cell cycle</keyword>
<keyword id="KW-0132">Cell division</keyword>
<keyword id="KW-0137">Centromere</keyword>
<keyword id="KW-0158">Chromosome</keyword>
<keyword id="KW-0159">Chromosome partition</keyword>
<keyword id="KW-0175">Coiled coil</keyword>
<keyword id="KW-0903">Direct protein sequencing</keyword>
<keyword id="KW-0995">Kinetochore</keyword>
<keyword id="KW-0469">Meiosis</keyword>
<keyword id="KW-0539">Nucleus</keyword>
<keyword id="KW-0597">Phosphoprotein</keyword>
<keyword id="KW-1185">Reference proteome</keyword>
<reference key="1">
    <citation type="journal article" date="2004" name="Genome Res.">
        <title>The status, quality, and expansion of the NIH full-length cDNA project: the Mammalian Gene Collection (MGC).</title>
        <authorList>
            <consortium name="The MGC Project Team"/>
        </authorList>
    </citation>
    <scope>NUCLEOTIDE SEQUENCE [LARGE SCALE MRNA]</scope>
    <source>
        <strain>C57BL/6J</strain>
        <strain>FVB/N</strain>
        <tissue>Brain</tissue>
        <tissue>Mammary tumor</tissue>
    </source>
</reference>
<reference key="2">
    <citation type="journal article" date="2005" name="Science">
        <title>The transcriptional landscape of the mammalian genome.</title>
        <authorList>
            <person name="Carninci P."/>
            <person name="Kasukawa T."/>
            <person name="Katayama S."/>
            <person name="Gough J."/>
            <person name="Frith M.C."/>
            <person name="Maeda N."/>
            <person name="Oyama R."/>
            <person name="Ravasi T."/>
            <person name="Lenhard B."/>
            <person name="Wells C."/>
            <person name="Kodzius R."/>
            <person name="Shimokawa K."/>
            <person name="Bajic V.B."/>
            <person name="Brenner S.E."/>
            <person name="Batalov S."/>
            <person name="Forrest A.R."/>
            <person name="Zavolan M."/>
            <person name="Davis M.J."/>
            <person name="Wilming L.G."/>
            <person name="Aidinis V."/>
            <person name="Allen J.E."/>
            <person name="Ambesi-Impiombato A."/>
            <person name="Apweiler R."/>
            <person name="Aturaliya R.N."/>
            <person name="Bailey T.L."/>
            <person name="Bansal M."/>
            <person name="Baxter L."/>
            <person name="Beisel K.W."/>
            <person name="Bersano T."/>
            <person name="Bono H."/>
            <person name="Chalk A.M."/>
            <person name="Chiu K.P."/>
            <person name="Choudhary V."/>
            <person name="Christoffels A."/>
            <person name="Clutterbuck D.R."/>
            <person name="Crowe M.L."/>
            <person name="Dalla E."/>
            <person name="Dalrymple B.P."/>
            <person name="de Bono B."/>
            <person name="Della Gatta G."/>
            <person name="di Bernardo D."/>
            <person name="Down T."/>
            <person name="Engstrom P."/>
            <person name="Fagiolini M."/>
            <person name="Faulkner G."/>
            <person name="Fletcher C.F."/>
            <person name="Fukushima T."/>
            <person name="Furuno M."/>
            <person name="Futaki S."/>
            <person name="Gariboldi M."/>
            <person name="Georgii-Hemming P."/>
            <person name="Gingeras T.R."/>
            <person name="Gojobori T."/>
            <person name="Green R.E."/>
            <person name="Gustincich S."/>
            <person name="Harbers M."/>
            <person name="Hayashi Y."/>
            <person name="Hensch T.K."/>
            <person name="Hirokawa N."/>
            <person name="Hill D."/>
            <person name="Huminiecki L."/>
            <person name="Iacono M."/>
            <person name="Ikeo K."/>
            <person name="Iwama A."/>
            <person name="Ishikawa T."/>
            <person name="Jakt M."/>
            <person name="Kanapin A."/>
            <person name="Katoh M."/>
            <person name="Kawasawa Y."/>
            <person name="Kelso J."/>
            <person name="Kitamura H."/>
            <person name="Kitano H."/>
            <person name="Kollias G."/>
            <person name="Krishnan S.P."/>
            <person name="Kruger A."/>
            <person name="Kummerfeld S.K."/>
            <person name="Kurochkin I.V."/>
            <person name="Lareau L.F."/>
            <person name="Lazarevic D."/>
            <person name="Lipovich L."/>
            <person name="Liu J."/>
            <person name="Liuni S."/>
            <person name="McWilliam S."/>
            <person name="Madan Babu M."/>
            <person name="Madera M."/>
            <person name="Marchionni L."/>
            <person name="Matsuda H."/>
            <person name="Matsuzawa S."/>
            <person name="Miki H."/>
            <person name="Mignone F."/>
            <person name="Miyake S."/>
            <person name="Morris K."/>
            <person name="Mottagui-Tabar S."/>
            <person name="Mulder N."/>
            <person name="Nakano N."/>
            <person name="Nakauchi H."/>
            <person name="Ng P."/>
            <person name="Nilsson R."/>
            <person name="Nishiguchi S."/>
            <person name="Nishikawa S."/>
            <person name="Nori F."/>
            <person name="Ohara O."/>
            <person name="Okazaki Y."/>
            <person name="Orlando V."/>
            <person name="Pang K.C."/>
            <person name="Pavan W.J."/>
            <person name="Pavesi G."/>
            <person name="Pesole G."/>
            <person name="Petrovsky N."/>
            <person name="Piazza S."/>
            <person name="Reed J."/>
            <person name="Reid J.F."/>
            <person name="Ring B.Z."/>
            <person name="Ringwald M."/>
            <person name="Rost B."/>
            <person name="Ruan Y."/>
            <person name="Salzberg S.L."/>
            <person name="Sandelin A."/>
            <person name="Schneider C."/>
            <person name="Schoenbach C."/>
            <person name="Sekiguchi K."/>
            <person name="Semple C.A."/>
            <person name="Seno S."/>
            <person name="Sessa L."/>
            <person name="Sheng Y."/>
            <person name="Shibata Y."/>
            <person name="Shimada H."/>
            <person name="Shimada K."/>
            <person name="Silva D."/>
            <person name="Sinclair B."/>
            <person name="Sperling S."/>
            <person name="Stupka E."/>
            <person name="Sugiura K."/>
            <person name="Sultana R."/>
            <person name="Takenaka Y."/>
            <person name="Taki K."/>
            <person name="Tammoja K."/>
            <person name="Tan S.L."/>
            <person name="Tang S."/>
            <person name="Taylor M.S."/>
            <person name="Tegner J."/>
            <person name="Teichmann S.A."/>
            <person name="Ueda H.R."/>
            <person name="van Nimwegen E."/>
            <person name="Verardo R."/>
            <person name="Wei C.L."/>
            <person name="Yagi K."/>
            <person name="Yamanishi H."/>
            <person name="Zabarovsky E."/>
            <person name="Zhu S."/>
            <person name="Zimmer A."/>
            <person name="Hide W."/>
            <person name="Bult C."/>
            <person name="Grimmond S.M."/>
            <person name="Teasdale R.D."/>
            <person name="Liu E.T."/>
            <person name="Brusic V."/>
            <person name="Quackenbush J."/>
            <person name="Wahlestedt C."/>
            <person name="Mattick J.S."/>
            <person name="Hume D.A."/>
            <person name="Kai C."/>
            <person name="Sasaki D."/>
            <person name="Tomaru Y."/>
            <person name="Fukuda S."/>
            <person name="Kanamori-Katayama M."/>
            <person name="Suzuki M."/>
            <person name="Aoki J."/>
            <person name="Arakawa T."/>
            <person name="Iida J."/>
            <person name="Imamura K."/>
            <person name="Itoh M."/>
            <person name="Kato T."/>
            <person name="Kawaji H."/>
            <person name="Kawagashira N."/>
            <person name="Kawashima T."/>
            <person name="Kojima M."/>
            <person name="Kondo S."/>
            <person name="Konno H."/>
            <person name="Nakano K."/>
            <person name="Ninomiya N."/>
            <person name="Nishio T."/>
            <person name="Okada M."/>
            <person name="Plessy C."/>
            <person name="Shibata K."/>
            <person name="Shiraki T."/>
            <person name="Suzuki S."/>
            <person name="Tagami M."/>
            <person name="Waki K."/>
            <person name="Watahiki A."/>
            <person name="Okamura-Oho Y."/>
            <person name="Suzuki H."/>
            <person name="Kawai J."/>
            <person name="Hayashizaki Y."/>
        </authorList>
    </citation>
    <scope>NUCLEOTIDE SEQUENCE [LARGE SCALE MRNA] OF 1-593</scope>
    <source>
        <strain>C57BL/6J</strain>
        <tissue>Thymus</tissue>
    </source>
</reference>
<reference key="3">
    <citation type="submission" date="2009-01" db="UniProtKB">
        <authorList>
            <person name="Lubec G."/>
            <person name="Kang S.U."/>
            <person name="Sunyer B."/>
            <person name="Chen W.-Q."/>
        </authorList>
    </citation>
    <scope>PROTEIN SEQUENCE OF 95-103; 259-269; 579-588 AND 1056-1065</scope>
    <scope>IDENTIFICATION BY MASS SPECTROMETRY</scope>
    <source>
        <strain>C57BL/6J</strain>
        <strain>OF1</strain>
        <tissue>Brain</tissue>
        <tissue>Hippocampus</tissue>
    </source>
</reference>
<reference key="4">
    <citation type="journal article" date="2007" name="EMBO Rep.">
        <title>Mammalian SGO2 appears at the inner centromere domain and redistributes depending on tension across centromeres during meiosis II and mitosis.</title>
        <authorList>
            <person name="Gomez R."/>
            <person name="Valdeolmillos A."/>
            <person name="Parra M.T."/>
            <person name="Viera A."/>
            <person name="Carreiro C."/>
            <person name="Roncal F."/>
            <person name="Rufas J.S."/>
            <person name="Barbero J.L."/>
            <person name="Suja J.A."/>
        </authorList>
    </citation>
    <scope>SUBCELLULAR LOCATION</scope>
</reference>
<reference key="5">
    <citation type="journal article" date="2008" name="Genes Dev.">
        <title>Shugoshin-2 is essential for the completion of meiosis but not for mitotic cell division in mice.</title>
        <authorList>
            <person name="Llano E."/>
            <person name="Gomez R."/>
            <person name="Gutierrez-Caballero C."/>
            <person name="Herran Y."/>
            <person name="Sanchez-Martin M."/>
            <person name="Vazquez-Quinones L."/>
            <person name="Hernandez T."/>
            <person name="de Alava E."/>
            <person name="Cuadrado A."/>
            <person name="Barbero J.L."/>
            <person name="Suja J.A."/>
            <person name="Pendas A.M."/>
        </authorList>
    </citation>
    <scope>DISRUPTION PHENOTYPE</scope>
    <scope>FUNCTION</scope>
</reference>
<reference key="6">
    <citation type="journal article" date="2008" name="Nat. Cell Biol.">
        <title>Unified mode of centromeric protection by shugoshin in mammalian oocytes and somatic cells.</title>
        <authorList>
            <person name="Lee J."/>
            <person name="Kitajima T.S."/>
            <person name="Tanno Y."/>
            <person name="Yoshida K."/>
            <person name="Morita T."/>
            <person name="Miyano T."/>
            <person name="Miyake M."/>
            <person name="Watanabe Y."/>
        </authorList>
    </citation>
    <scope>FUNCTION</scope>
    <scope>SUBCELLULAR LOCATION</scope>
    <scope>TISSUE SPECIFICITY</scope>
</reference>
<accession>Q7TSY8</accession>
<accession>Q811I4</accession>
<accession>Q8C9C4</accession>
<accession>Q8CGJ4</accession>
<accession>Q9CS55</accession>
<proteinExistence type="evidence at protein level"/>
<gene>
    <name evidence="8" type="primary">Sgo2a</name>
    <name evidence="8" type="synonym">Sgo2</name>
    <name type="synonym">Sgol2</name>
    <name evidence="8" type="synonym">Sgol2a</name>
</gene>